<gene>
    <name type="primary">DIM1</name>
    <name type="ordered locus">ACR026W</name>
</gene>
<reference key="1">
    <citation type="journal article" date="2004" name="Science">
        <title>The Ashbya gossypii genome as a tool for mapping the ancient Saccharomyces cerevisiae genome.</title>
        <authorList>
            <person name="Dietrich F.S."/>
            <person name="Voegeli S."/>
            <person name="Brachat S."/>
            <person name="Lerch A."/>
            <person name="Gates K."/>
            <person name="Steiner S."/>
            <person name="Mohr C."/>
            <person name="Poehlmann R."/>
            <person name="Luedi P."/>
            <person name="Choi S."/>
            <person name="Wing R.A."/>
            <person name="Flavier A."/>
            <person name="Gaffney T.D."/>
            <person name="Philippsen P."/>
        </authorList>
    </citation>
    <scope>NUCLEOTIDE SEQUENCE [LARGE SCALE GENOMIC DNA]</scope>
    <source>
        <strain>ATCC 10895 / CBS 109.51 / FGSC 9923 / NRRL Y-1056</strain>
    </source>
</reference>
<reference key="2">
    <citation type="journal article" date="2013" name="G3 (Bethesda)">
        <title>Genomes of Ashbya fungi isolated from insects reveal four mating-type loci, numerous translocations, lack of transposons, and distinct gene duplications.</title>
        <authorList>
            <person name="Dietrich F.S."/>
            <person name="Voegeli S."/>
            <person name="Kuo S."/>
            <person name="Philippsen P."/>
        </authorList>
    </citation>
    <scope>GENOME REANNOTATION</scope>
    <source>
        <strain>ATCC 10895 / CBS 109.51 / FGSC 9923 / NRRL Y-1056</strain>
    </source>
</reference>
<protein>
    <recommendedName>
        <fullName>Dimethyladenosine transferase</fullName>
        <ecNumber>2.1.1.183</ecNumber>
    </recommendedName>
    <alternativeName>
        <fullName>18S rRNA (adenine(1779)-N(6)/adenine(1780)-N(6))-dimethyltransferase</fullName>
    </alternativeName>
    <alternativeName>
        <fullName>18S rRNA dimethylase</fullName>
    </alternativeName>
    <alternativeName>
        <fullName>S-adenosylmethionine-6-N', N'-adenosyl(rRNA) dimethyltransferase</fullName>
    </alternativeName>
</protein>
<name>DIM1_EREGS</name>
<proteinExistence type="inferred from homology"/>
<organism>
    <name type="scientific">Eremothecium gossypii (strain ATCC 10895 / CBS 109.51 / FGSC 9923 / NRRL Y-1056)</name>
    <name type="common">Yeast</name>
    <name type="synonym">Ashbya gossypii</name>
    <dbReference type="NCBI Taxonomy" id="284811"/>
    <lineage>
        <taxon>Eukaryota</taxon>
        <taxon>Fungi</taxon>
        <taxon>Dikarya</taxon>
        <taxon>Ascomycota</taxon>
        <taxon>Saccharomycotina</taxon>
        <taxon>Saccharomycetes</taxon>
        <taxon>Saccharomycetales</taxon>
        <taxon>Saccharomycetaceae</taxon>
        <taxon>Eremothecium</taxon>
    </lineage>
</organism>
<evidence type="ECO:0000255" key="1">
    <source>
        <dbReference type="PROSITE-ProRule" id="PRU01026"/>
    </source>
</evidence>
<dbReference type="EC" id="2.1.1.183"/>
<dbReference type="EMBL" id="AE016816">
    <property type="protein sequence ID" value="AAS51253.1"/>
    <property type="molecule type" value="Genomic_DNA"/>
</dbReference>
<dbReference type="RefSeq" id="NP_983429.1">
    <property type="nucleotide sequence ID" value="NM_208782.1"/>
</dbReference>
<dbReference type="SMR" id="Q75C90"/>
<dbReference type="FunCoup" id="Q75C90">
    <property type="interactions" value="822"/>
</dbReference>
<dbReference type="STRING" id="284811.Q75C90"/>
<dbReference type="EnsemblFungi" id="AAS51253">
    <property type="protein sequence ID" value="AAS51253"/>
    <property type="gene ID" value="AGOS_ACR026W"/>
</dbReference>
<dbReference type="GeneID" id="4619554"/>
<dbReference type="KEGG" id="ago:AGOS_ACR026W"/>
<dbReference type="eggNOG" id="KOG0820">
    <property type="taxonomic scope" value="Eukaryota"/>
</dbReference>
<dbReference type="HOGENOM" id="CLU_041220_2_0_1"/>
<dbReference type="InParanoid" id="Q75C90"/>
<dbReference type="OMA" id="ANYRTWC"/>
<dbReference type="OrthoDB" id="74991at2759"/>
<dbReference type="Proteomes" id="UP000000591">
    <property type="component" value="Chromosome III"/>
</dbReference>
<dbReference type="GO" id="GO:0030688">
    <property type="term" value="C:preribosome, small subunit precursor"/>
    <property type="evidence" value="ECO:0007669"/>
    <property type="project" value="EnsemblFungi"/>
</dbReference>
<dbReference type="GO" id="GO:0052909">
    <property type="term" value="F:18S rRNA (adenine(1779)-N(6)/adenine(1780)-N(6))-dimethyltransferase activity"/>
    <property type="evidence" value="ECO:0007669"/>
    <property type="project" value="UniProtKB-EC"/>
</dbReference>
<dbReference type="GO" id="GO:0003723">
    <property type="term" value="F:RNA binding"/>
    <property type="evidence" value="ECO:0007669"/>
    <property type="project" value="UniProtKB-KW"/>
</dbReference>
<dbReference type="GO" id="GO:0000179">
    <property type="term" value="F:rRNA (adenine-N6,N6-)-dimethyltransferase activity"/>
    <property type="evidence" value="ECO:0000318"/>
    <property type="project" value="GO_Central"/>
</dbReference>
<dbReference type="GO" id="GO:0000462">
    <property type="term" value="P:maturation of SSU-rRNA from tricistronic rRNA transcript (SSU-rRNA, 5.8S rRNA, LSU-rRNA)"/>
    <property type="evidence" value="ECO:0007669"/>
    <property type="project" value="EnsemblFungi"/>
</dbReference>
<dbReference type="GO" id="GO:0031167">
    <property type="term" value="P:rRNA methylation"/>
    <property type="evidence" value="ECO:0000318"/>
    <property type="project" value="GO_Central"/>
</dbReference>
<dbReference type="CDD" id="cd02440">
    <property type="entry name" value="AdoMet_MTases"/>
    <property type="match status" value="1"/>
</dbReference>
<dbReference type="FunFam" id="1.10.8.480:FF:000002">
    <property type="entry name" value="rRNA adenine N(6)-methyltransferase"/>
    <property type="match status" value="1"/>
</dbReference>
<dbReference type="FunFam" id="3.40.50.150:FF:000007">
    <property type="entry name" value="rRNA adenine N(6)-methyltransferase"/>
    <property type="match status" value="1"/>
</dbReference>
<dbReference type="Gene3D" id="1.10.8.480">
    <property type="match status" value="1"/>
</dbReference>
<dbReference type="Gene3D" id="3.40.50.150">
    <property type="entry name" value="Vaccinia Virus protein VP39"/>
    <property type="match status" value="1"/>
</dbReference>
<dbReference type="InterPro" id="IPR001737">
    <property type="entry name" value="KsgA/Erm"/>
</dbReference>
<dbReference type="InterPro" id="IPR020596">
    <property type="entry name" value="rRNA_Ade_Mease_Trfase_CS"/>
</dbReference>
<dbReference type="InterPro" id="IPR020598">
    <property type="entry name" value="rRNA_Ade_methylase_Trfase_N"/>
</dbReference>
<dbReference type="InterPro" id="IPR011530">
    <property type="entry name" value="rRNA_adenine_dimethylase"/>
</dbReference>
<dbReference type="InterPro" id="IPR029063">
    <property type="entry name" value="SAM-dependent_MTases_sf"/>
</dbReference>
<dbReference type="NCBIfam" id="TIGR00755">
    <property type="entry name" value="ksgA"/>
    <property type="match status" value="1"/>
</dbReference>
<dbReference type="PANTHER" id="PTHR11727">
    <property type="entry name" value="DIMETHYLADENOSINE TRANSFERASE"/>
    <property type="match status" value="1"/>
</dbReference>
<dbReference type="PANTHER" id="PTHR11727:SF7">
    <property type="entry name" value="DIMETHYLADENOSINE TRANSFERASE-RELATED"/>
    <property type="match status" value="1"/>
</dbReference>
<dbReference type="Pfam" id="PF00398">
    <property type="entry name" value="RrnaAD"/>
    <property type="match status" value="1"/>
</dbReference>
<dbReference type="SMART" id="SM00650">
    <property type="entry name" value="rADc"/>
    <property type="match status" value="1"/>
</dbReference>
<dbReference type="SUPFAM" id="SSF53335">
    <property type="entry name" value="S-adenosyl-L-methionine-dependent methyltransferases"/>
    <property type="match status" value="1"/>
</dbReference>
<dbReference type="PROSITE" id="PS01131">
    <property type="entry name" value="RRNA_A_DIMETH"/>
    <property type="match status" value="1"/>
</dbReference>
<dbReference type="PROSITE" id="PS51689">
    <property type="entry name" value="SAM_RNA_A_N6_MT"/>
    <property type="match status" value="1"/>
</dbReference>
<keyword id="KW-0489">Methyltransferase</keyword>
<keyword id="KW-1185">Reference proteome</keyword>
<keyword id="KW-0694">RNA-binding</keyword>
<keyword id="KW-0698">rRNA processing</keyword>
<keyword id="KW-0949">S-adenosyl-L-methionine</keyword>
<keyword id="KW-0808">Transferase</keyword>
<accession>Q75C90</accession>
<sequence length="319" mass="35818">MGKAAKKKYSGISTGKEVPSEQHMNTVFKFNTDLGQHILKNPLVAQGIVDKAQIKPSDIVLEVGPGTGNLTVRILEQARKVVAVEFDPRMAAELTKRVHGTPAEKKLEIMLGDFMKTELPYFDICISNTPYQISSPLVFKLINQPRPPRVSILMFQREFAMRLLARPGDSLYCRLSANVQMWANVTHVMKVGRNNFRPPPQVESSVVRIEIKTPRPPVDFNEWDGLLRIVFVRKNRTISAGFKSTAVLEIMEKNYKAYLATTNDAMVDDAKGSLAEQVKQKIETVLAETGLSDKRAGKCDQTDFLKLLYAFHQVGLHFS</sequence>
<feature type="chain" id="PRO_0000101458" description="Dimethyladenosine transferase">
    <location>
        <begin position="1"/>
        <end position="319"/>
    </location>
</feature>
<feature type="binding site" evidence="1">
    <location>
        <position position="37"/>
    </location>
    <ligand>
        <name>S-adenosyl-L-methionine</name>
        <dbReference type="ChEBI" id="CHEBI:59789"/>
    </ligand>
</feature>
<feature type="binding site" evidence="1">
    <location>
        <position position="39"/>
    </location>
    <ligand>
        <name>S-adenosyl-L-methionine</name>
        <dbReference type="ChEBI" id="CHEBI:59789"/>
    </ligand>
</feature>
<feature type="binding site" evidence="1">
    <location>
        <position position="64"/>
    </location>
    <ligand>
        <name>S-adenosyl-L-methionine</name>
        <dbReference type="ChEBI" id="CHEBI:59789"/>
    </ligand>
</feature>
<feature type="binding site" evidence="1">
    <location>
        <position position="85"/>
    </location>
    <ligand>
        <name>S-adenosyl-L-methionine</name>
        <dbReference type="ChEBI" id="CHEBI:59789"/>
    </ligand>
</feature>
<feature type="binding site" evidence="1">
    <location>
        <position position="113"/>
    </location>
    <ligand>
        <name>S-adenosyl-L-methionine</name>
        <dbReference type="ChEBI" id="CHEBI:59789"/>
    </ligand>
</feature>
<feature type="binding site" evidence="1">
    <location>
        <position position="128"/>
    </location>
    <ligand>
        <name>S-adenosyl-L-methionine</name>
        <dbReference type="ChEBI" id="CHEBI:59789"/>
    </ligand>
</feature>
<comment type="function">
    <text>Specifically dimethylates two adjacent adenosines in the loop of a conserved hairpin near the 3'-end of 18S rRNA in the 40S particle.</text>
</comment>
<comment type="catalytic activity">
    <reaction>
        <text>adenosine(1779)/adenosine(1780) in 18S rRNA + 4 S-adenosyl-L-methionine = N(6)-dimethyladenosine(1779)/N(6)-dimethyladenosine(1780) in 18S rRNA + 4 S-adenosyl-L-homocysteine + 4 H(+)</text>
        <dbReference type="Rhea" id="RHEA:42780"/>
        <dbReference type="Rhea" id="RHEA-COMP:10234"/>
        <dbReference type="Rhea" id="RHEA-COMP:10236"/>
        <dbReference type="ChEBI" id="CHEBI:15378"/>
        <dbReference type="ChEBI" id="CHEBI:57856"/>
        <dbReference type="ChEBI" id="CHEBI:59789"/>
        <dbReference type="ChEBI" id="CHEBI:74411"/>
        <dbReference type="ChEBI" id="CHEBI:74493"/>
        <dbReference type="EC" id="2.1.1.183"/>
    </reaction>
</comment>
<comment type="similarity">
    <text evidence="1">Belongs to the class I-like SAM-binding methyltransferase superfamily. rRNA adenine N(6)-methyltransferase family.</text>
</comment>